<organism>
    <name type="scientific">Saccharomyces cerevisiae (strain ATCC 204508 / S288c)</name>
    <name type="common">Baker's yeast</name>
    <dbReference type="NCBI Taxonomy" id="559292"/>
    <lineage>
        <taxon>Eukaryota</taxon>
        <taxon>Fungi</taxon>
        <taxon>Dikarya</taxon>
        <taxon>Ascomycota</taxon>
        <taxon>Saccharomycotina</taxon>
        <taxon>Saccharomycetes</taxon>
        <taxon>Saccharomycetales</taxon>
        <taxon>Saccharomycetaceae</taxon>
        <taxon>Saccharomyces</taxon>
    </lineage>
</organism>
<protein>
    <recommendedName>
        <fullName>Uncharacterized protein YMR175W-A</fullName>
    </recommendedName>
</protein>
<dbReference type="EMBL" id="Z49808">
    <property type="status" value="NOT_ANNOTATED_CDS"/>
    <property type="molecule type" value="Genomic_DNA"/>
</dbReference>
<dbReference type="EMBL" id="BK006946">
    <property type="protein sequence ID" value="DAA10072.1"/>
    <property type="molecule type" value="Genomic_DNA"/>
</dbReference>
<dbReference type="RefSeq" id="NP_878143.1">
    <property type="nucleotide sequence ID" value="NM_001184660.1"/>
</dbReference>
<dbReference type="BioGRID" id="37043">
    <property type="interactions" value="55"/>
</dbReference>
<dbReference type="FunCoup" id="Q3E766">
    <property type="interactions" value="5"/>
</dbReference>
<dbReference type="PaxDb" id="4932-YMR175W-A"/>
<dbReference type="EnsemblFungi" id="YMR175W-A_mRNA">
    <property type="protein sequence ID" value="YMR175W-A"/>
    <property type="gene ID" value="YMR175W-A"/>
</dbReference>
<dbReference type="GeneID" id="1466501"/>
<dbReference type="KEGG" id="sce:YMR175W-A"/>
<dbReference type="AGR" id="SGD:S000028848"/>
<dbReference type="SGD" id="S000028848">
    <property type="gene designation" value="YMR175W-A"/>
</dbReference>
<dbReference type="VEuPathDB" id="FungiDB:YMR175W-A"/>
<dbReference type="HOGENOM" id="CLU_2869378_0_0_1"/>
<dbReference type="InParanoid" id="Q3E766"/>
<dbReference type="BioCyc" id="YEAST:G3O-33036-MONOMER"/>
<dbReference type="BioGRID-ORCS" id="1466501">
    <property type="hits" value="0 hits in 10 CRISPR screens"/>
</dbReference>
<dbReference type="PRO" id="PR:Q3E766"/>
<dbReference type="Proteomes" id="UP000002311">
    <property type="component" value="Chromosome XIII"/>
</dbReference>
<dbReference type="RNAct" id="Q3E766">
    <property type="molecule type" value="protein"/>
</dbReference>
<proteinExistence type="evidence at protein level"/>
<keyword id="KW-1185">Reference proteome</keyword>
<reference key="1">
    <citation type="journal article" date="1997" name="Nature">
        <title>The nucleotide sequence of Saccharomyces cerevisiae chromosome XIII.</title>
        <authorList>
            <person name="Bowman S."/>
            <person name="Churcher C.M."/>
            <person name="Badcock K."/>
            <person name="Brown D."/>
            <person name="Chillingworth T."/>
            <person name="Connor R."/>
            <person name="Dedman K."/>
            <person name="Devlin K."/>
            <person name="Gentles S."/>
            <person name="Hamlin N."/>
            <person name="Hunt S."/>
            <person name="Jagels K."/>
            <person name="Lye G."/>
            <person name="Moule S."/>
            <person name="Odell C."/>
            <person name="Pearson D."/>
            <person name="Rajandream M.A."/>
            <person name="Rice P."/>
            <person name="Skelton J."/>
            <person name="Walsh S.V."/>
            <person name="Whitehead S."/>
            <person name="Barrell B.G."/>
        </authorList>
    </citation>
    <scope>NUCLEOTIDE SEQUENCE [LARGE SCALE GENOMIC DNA]</scope>
    <source>
        <strain>ATCC 204508 / S288c</strain>
    </source>
</reference>
<reference key="2">
    <citation type="journal article" date="2014" name="G3 (Bethesda)">
        <title>The reference genome sequence of Saccharomyces cerevisiae: Then and now.</title>
        <authorList>
            <person name="Engel S.R."/>
            <person name="Dietrich F.S."/>
            <person name="Fisk D.G."/>
            <person name="Binkley G."/>
            <person name="Balakrishnan R."/>
            <person name="Costanzo M.C."/>
            <person name="Dwight S.S."/>
            <person name="Hitz B.C."/>
            <person name="Karra K."/>
            <person name="Nash R.S."/>
            <person name="Weng S."/>
            <person name="Wong E.D."/>
            <person name="Lloyd P."/>
            <person name="Skrzypek M.S."/>
            <person name="Miyasato S.R."/>
            <person name="Simison M."/>
            <person name="Cherry J.M."/>
        </authorList>
    </citation>
    <scope>GENOME REANNOTATION</scope>
    <source>
        <strain>ATCC 204508 / S288c</strain>
    </source>
</reference>
<reference key="3">
    <citation type="journal article" date="2002" name="Genome Res.">
        <title>Parallel identification of new genes in Saccharomyces cerevisiae.</title>
        <authorList>
            <person name="Oshiro G."/>
            <person name="Wodicka L.M."/>
            <person name="Washburn M.P."/>
            <person name="Yates J.R. III"/>
            <person name="Lockhart D.J."/>
            <person name="Winzeler E.A."/>
        </authorList>
    </citation>
    <scope>IDENTIFICATION BY MASS SPECTROMETRY</scope>
</reference>
<accession>Q3E766</accession>
<accession>D6VZZ8</accession>
<name>YM175_YEAST</name>
<gene>
    <name type="ordered locus">YMR175W-A</name>
</gene>
<feature type="chain" id="PRO_0000247788" description="Uncharacterized protein YMR175W-A">
    <location>
        <begin position="1"/>
        <end position="64"/>
    </location>
</feature>
<sequence length="64" mass="7309">MNCLCLCSLYSKSISAYFSEFSSTNIYKSYLRLPSVLYYVCMMHTMMPNQLDAVGIQSSESLLM</sequence>